<organism>
    <name type="scientific">Acidovorax ebreus (strain TPSY)</name>
    <name type="common">Diaphorobacter sp. (strain TPSY)</name>
    <dbReference type="NCBI Taxonomy" id="535289"/>
    <lineage>
        <taxon>Bacteria</taxon>
        <taxon>Pseudomonadati</taxon>
        <taxon>Pseudomonadota</taxon>
        <taxon>Betaproteobacteria</taxon>
        <taxon>Burkholderiales</taxon>
        <taxon>Comamonadaceae</taxon>
        <taxon>Diaphorobacter</taxon>
    </lineage>
</organism>
<sequence>MELNSIKPADGAKHAARRVGRGIGSGLGKTAGRGHKGQKSRSGGYHKVGFEGGQMPLQRRLPKRGFKSHLLKFNAEISLTALENLGLAEVDVLALKNAGLVGELAKVVKVIKSGEISKAVKLSGITATAGAKAAIEAAGGSLA</sequence>
<keyword id="KW-1185">Reference proteome</keyword>
<keyword id="KW-0687">Ribonucleoprotein</keyword>
<keyword id="KW-0689">Ribosomal protein</keyword>
<keyword id="KW-0694">RNA-binding</keyword>
<keyword id="KW-0699">rRNA-binding</keyword>
<evidence type="ECO:0000255" key="1">
    <source>
        <dbReference type="HAMAP-Rule" id="MF_01341"/>
    </source>
</evidence>
<evidence type="ECO:0000256" key="2">
    <source>
        <dbReference type="SAM" id="MobiDB-lite"/>
    </source>
</evidence>
<evidence type="ECO:0000305" key="3"/>
<dbReference type="EMBL" id="CP001392">
    <property type="protein sequence ID" value="ACM31876.1"/>
    <property type="molecule type" value="Genomic_DNA"/>
</dbReference>
<dbReference type="RefSeq" id="WP_011803862.1">
    <property type="nucleotide sequence ID" value="NC_011992.1"/>
</dbReference>
<dbReference type="SMR" id="B9MBV6"/>
<dbReference type="GeneID" id="84683094"/>
<dbReference type="KEGG" id="dia:Dtpsy_0392"/>
<dbReference type="eggNOG" id="COG0200">
    <property type="taxonomic scope" value="Bacteria"/>
</dbReference>
<dbReference type="HOGENOM" id="CLU_055188_4_2_4"/>
<dbReference type="Proteomes" id="UP000000450">
    <property type="component" value="Chromosome"/>
</dbReference>
<dbReference type="GO" id="GO:0022625">
    <property type="term" value="C:cytosolic large ribosomal subunit"/>
    <property type="evidence" value="ECO:0007669"/>
    <property type="project" value="TreeGrafter"/>
</dbReference>
<dbReference type="GO" id="GO:0019843">
    <property type="term" value="F:rRNA binding"/>
    <property type="evidence" value="ECO:0007669"/>
    <property type="project" value="UniProtKB-UniRule"/>
</dbReference>
<dbReference type="GO" id="GO:0003735">
    <property type="term" value="F:structural constituent of ribosome"/>
    <property type="evidence" value="ECO:0007669"/>
    <property type="project" value="InterPro"/>
</dbReference>
<dbReference type="GO" id="GO:0006412">
    <property type="term" value="P:translation"/>
    <property type="evidence" value="ECO:0007669"/>
    <property type="project" value="UniProtKB-UniRule"/>
</dbReference>
<dbReference type="Gene3D" id="3.100.10.10">
    <property type="match status" value="1"/>
</dbReference>
<dbReference type="HAMAP" id="MF_01341">
    <property type="entry name" value="Ribosomal_uL15"/>
    <property type="match status" value="1"/>
</dbReference>
<dbReference type="InterPro" id="IPR030878">
    <property type="entry name" value="Ribosomal_uL15"/>
</dbReference>
<dbReference type="InterPro" id="IPR021131">
    <property type="entry name" value="Ribosomal_uL15/eL18"/>
</dbReference>
<dbReference type="InterPro" id="IPR036227">
    <property type="entry name" value="Ribosomal_uL15/eL18_sf"/>
</dbReference>
<dbReference type="InterPro" id="IPR005749">
    <property type="entry name" value="Ribosomal_uL15_bac-type"/>
</dbReference>
<dbReference type="NCBIfam" id="TIGR01071">
    <property type="entry name" value="rplO_bact"/>
    <property type="match status" value="1"/>
</dbReference>
<dbReference type="PANTHER" id="PTHR12934">
    <property type="entry name" value="50S RIBOSOMAL PROTEIN L15"/>
    <property type="match status" value="1"/>
</dbReference>
<dbReference type="PANTHER" id="PTHR12934:SF11">
    <property type="entry name" value="LARGE RIBOSOMAL SUBUNIT PROTEIN UL15M"/>
    <property type="match status" value="1"/>
</dbReference>
<dbReference type="Pfam" id="PF00828">
    <property type="entry name" value="Ribosomal_L27A"/>
    <property type="match status" value="1"/>
</dbReference>
<dbReference type="SUPFAM" id="SSF52080">
    <property type="entry name" value="Ribosomal proteins L15p and L18e"/>
    <property type="match status" value="1"/>
</dbReference>
<proteinExistence type="inferred from homology"/>
<reference key="1">
    <citation type="submission" date="2009-01" db="EMBL/GenBank/DDBJ databases">
        <title>Complete sequence of Diaphorobacter sp. TPSY.</title>
        <authorList>
            <consortium name="US DOE Joint Genome Institute"/>
            <person name="Lucas S."/>
            <person name="Copeland A."/>
            <person name="Lapidus A."/>
            <person name="Glavina del Rio T."/>
            <person name="Tice H."/>
            <person name="Bruce D."/>
            <person name="Goodwin L."/>
            <person name="Pitluck S."/>
            <person name="Chertkov O."/>
            <person name="Brettin T."/>
            <person name="Detter J.C."/>
            <person name="Han C."/>
            <person name="Larimer F."/>
            <person name="Land M."/>
            <person name="Hauser L."/>
            <person name="Kyrpides N."/>
            <person name="Mikhailova N."/>
            <person name="Coates J.D."/>
        </authorList>
    </citation>
    <scope>NUCLEOTIDE SEQUENCE [LARGE SCALE GENOMIC DNA]</scope>
    <source>
        <strain>TPSY</strain>
    </source>
</reference>
<name>RL15_ACIET</name>
<comment type="function">
    <text evidence="1">Binds to the 23S rRNA.</text>
</comment>
<comment type="subunit">
    <text evidence="1">Part of the 50S ribosomal subunit.</text>
</comment>
<comment type="similarity">
    <text evidence="1">Belongs to the universal ribosomal protein uL15 family.</text>
</comment>
<gene>
    <name evidence="1" type="primary">rplO</name>
    <name type="ordered locus">Dtpsy_0392</name>
</gene>
<feature type="chain" id="PRO_1000166292" description="Large ribosomal subunit protein uL15">
    <location>
        <begin position="1"/>
        <end position="143"/>
    </location>
</feature>
<feature type="region of interest" description="Disordered" evidence="2">
    <location>
        <begin position="1"/>
        <end position="54"/>
    </location>
</feature>
<feature type="compositionally biased region" description="Gly residues" evidence="2">
    <location>
        <begin position="21"/>
        <end position="31"/>
    </location>
</feature>
<accession>B9MBV6</accession>
<protein>
    <recommendedName>
        <fullName evidence="1">Large ribosomal subunit protein uL15</fullName>
    </recommendedName>
    <alternativeName>
        <fullName evidence="3">50S ribosomal protein L15</fullName>
    </alternativeName>
</protein>